<feature type="chain" id="PRO_0000455396" description="Dibenzothiophene monooxygenase">
    <location>
        <begin position="1"/>
        <end position="415"/>
    </location>
</feature>
<feature type="region of interest" description="Lid loop" evidence="1">
    <location>
        <begin position="129"/>
        <end position="140"/>
    </location>
</feature>
<feature type="binding site" evidence="1">
    <location>
        <position position="94"/>
    </location>
    <ligand>
        <name>FMN</name>
        <dbReference type="ChEBI" id="CHEBI:58210"/>
    </ligand>
</feature>
<feature type="binding site" evidence="1">
    <location>
        <begin position="127"/>
        <end position="132"/>
    </location>
    <ligand>
        <name>FMN</name>
        <dbReference type="ChEBI" id="CHEBI:58210"/>
    </ligand>
</feature>
<feature type="binding site" evidence="1">
    <location>
        <begin position="157"/>
        <end position="161"/>
    </location>
    <ligand>
        <name>FMN</name>
        <dbReference type="ChEBI" id="CHEBI:58210"/>
    </ligand>
</feature>
<feature type="binding site" evidence="1">
    <location>
        <position position="280"/>
    </location>
    <ligand>
        <name>FMN</name>
        <dbReference type="ChEBI" id="CHEBI:58210"/>
    </ligand>
</feature>
<feature type="binding site" evidence="1">
    <location>
        <begin position="365"/>
        <end position="366"/>
    </location>
    <ligand>
        <name>FMN</name>
        <dbReference type="ChEBI" id="CHEBI:58210"/>
    </ligand>
</feature>
<feature type="binding site" evidence="1">
    <location>
        <position position="387"/>
    </location>
    <ligand>
        <name>FMN</name>
        <dbReference type="ChEBI" id="CHEBI:58210"/>
    </ligand>
</feature>
<feature type="sequence conflict" description="In Ref. 1; ACB32256." evidence="5" ref="1">
    <original>TDDTTTAQNSRHGDPIEVARELTRKWQTTVVERDK</original>
    <variation>SPEKQHVRPRDAADNDPVAVARGLAEKWRATAVERDR</variation>
    <location>
        <begin position="4"/>
        <end position="38"/>
    </location>
</feature>
<feature type="sequence conflict" description="In Ref. 1; ACB32256." evidence="5" ref="1">
    <original>E</original>
    <variation>A</variation>
    <location>
        <position position="45"/>
    </location>
</feature>
<feature type="sequence conflict" description="In Ref. 1; ACB32256." evidence="5" ref="1">
    <original>VTVPRHLGGWGA</original>
    <variation>LLVPREYGGWGT</variation>
    <location>
        <begin position="58"/>
        <end position="69"/>
    </location>
</feature>
<feature type="sequence conflict" description="In Ref. 1; ACB32256." evidence="5" ref="1">
    <original>L</original>
    <variation>I</variation>
    <location>
        <position position="75"/>
    </location>
</feature>
<feature type="sequence conflict" description="In Ref. 1; ACB32256." evidence="5" ref="1">
    <original>KV</original>
    <variation>AA</variation>
    <location>
        <begin position="83"/>
        <end position="84"/>
    </location>
</feature>
<feature type="sequence conflict" description="In Ref. 1; ACB32256." evidence="5" ref="1">
    <original>STPAVIDLWGSPEQKERLLRQLAE</original>
    <variation>TNAPMIELIGSQEQEEHLYTQIAQ</variation>
    <location>
        <begin position="97"/>
        <end position="120"/>
    </location>
</feature>
<feature type="sequence conflict" description="In Ref. 1; ACB32256." evidence="5" ref="1">
    <original>I</original>
    <variation>V</variation>
    <location>
        <position position="136"/>
    </location>
</feature>
<feature type="sequence conflict" description="In Ref. 1; ACB32256." evidence="5" ref="1">
    <original>TATPADDGGYFFNGIKHFS</original>
    <variation>SATPTEDGGYVLNGTKHFC</variation>
    <location>
        <begin position="142"/>
        <end position="160"/>
    </location>
</feature>
<feature type="sequence conflict" description="In Ref. 1; ACB32256." evidence="5" ref="1">
    <original>LVFGVIPEGF</original>
    <variation>FVFGVVQDDS</variation>
    <location>
        <begin position="170"/>
        <end position="179"/>
    </location>
</feature>
<feature type="sequence conflict" description="In Ref. 1; ACB32256." evidence="5" ref="1">
    <original>V</original>
    <variation>I</variation>
    <location>
        <position position="186"/>
    </location>
</feature>
<feature type="sequence conflict" description="In Ref. 1; ACB32256." evidence="5" ref="1">
    <original>TREGVQ</original>
    <variation>SRAGVT</variation>
    <location>
        <begin position="193"/>
        <end position="198"/>
    </location>
</feature>
<feature type="sequence conflict" description="In Ref. 1; ACB32256." evidence="5" ref="1">
    <original>QALGMRRTDSGTTEFHNVAVR</original>
    <variation>AAIGMRQTDSGSTDFHNVKVE</variation>
    <location>
        <begin position="204"/>
        <end position="224"/>
    </location>
</feature>
<feature type="sequence conflict" description="In Ref. 1; ACB32256." evidence="5" ref="1">
    <original>KPNAILEAFLASG</original>
    <variation>APNAFVLAFIQSE</variation>
    <location>
        <begin position="231"/>
        <end position="243"/>
    </location>
</feature>
<feature type="sequence conflict" description="In Ref. 1; ACB32256." evidence="5" ref="1">
    <original>GPIVQLVFSS</original>
    <variation>APIAQLIFAN</variation>
    <location>
        <begin position="249"/>
        <end position="258"/>
    </location>
</feature>
<feature type="sequence conflict" description="In Ref. 1; ACB32256." evidence="5" ref="1">
    <original>RGALET</original>
    <variation>HGALDA</variation>
    <location>
        <begin position="265"/>
        <end position="270"/>
    </location>
</feature>
<feature type="sequence conflict" description="In Ref. 1; ACB32256." evidence="5" ref="1">
    <original>VTQAV</original>
    <variation>IQQAT</variation>
    <location>
        <begin position="287"/>
        <end position="291"/>
    </location>
</feature>
<feature type="sequence conflict" description="In Ref. 1; ACB32256." evidence="5" ref="1">
    <original>GIQLQA</original>
    <variation>TIALQG</variation>
    <location>
        <begin position="304"/>
        <end position="309"/>
    </location>
</feature>
<feature type="sequence conflict" description="In Ref. 1; ACB32256." evidence="5" ref="1">
    <original>QLLQAA</original>
    <variation>HLLQTV</variation>
    <location>
        <begin position="319"/>
        <end position="324"/>
    </location>
</feature>
<feature type="sequence conflict" description="In Ref. 1; ACB32256." evidence="5" ref="1">
    <original>SQE</original>
    <variation>PED</variation>
    <location>
        <begin position="333"/>
        <end position="335"/>
    </location>
</feature>
<feature type="sequence conflict" description="In Ref. 1; ACB32256." evidence="5" ref="1">
    <original>QI</original>
    <variation>KV</variation>
    <location>
        <begin position="342"/>
        <end position="343"/>
    </location>
</feature>
<feature type="sequence conflict" description="In Ref. 1; ACB32256." evidence="5" ref="1">
    <original>IATQAALDVTSRI</original>
    <variation>LATNAALNISSGV</variation>
    <location>
        <begin position="349"/>
        <end position="361"/>
    </location>
</feature>
<feature type="sequence conflict" description="In Ref. 1; ACB32256." evidence="5" ref="1">
    <original>K</original>
    <variation>R</variation>
    <location>
        <position position="373"/>
    </location>
</feature>
<feature type="sequence conflict" description="In Ref. 1; ACB32256." evidence="5" ref="1">
    <original>IRTHT</original>
    <variation>VRTHS</variation>
    <location>
        <begin position="383"/>
        <end position="387"/>
    </location>
</feature>
<feature type="sequence conflict" description="In Ref. 1; ACB32256." evidence="5" ref="1">
    <original>EVGNYVLNQR</original>
    <variation>DVGKHTLNGQ</variation>
    <location>
        <begin position="398"/>
        <end position="407"/>
    </location>
</feature>
<reference key="1">
    <citation type="journal article" date="2009" name="Bioresour. Technol.">
        <title>Both FMNH2 and FADH2 can be utilized by the dibenzothiophene monooxygenase from a desulfurizing bacterium Mycobacterium goodii X7B.</title>
        <authorList>
            <person name="Li J."/>
            <person name="Feng J."/>
            <person name="Li Q."/>
            <person name="Ma C."/>
            <person name="Yu B."/>
            <person name="Gao C."/>
            <person name="Wu G."/>
            <person name="Xu P."/>
        </authorList>
    </citation>
    <scope>NUCLEOTIDE SEQUENCE [GENOMIC DNA]</scope>
    <scope>FUNCTION</scope>
    <scope>CATALYTIC ACTIVITY</scope>
    <scope>ACTIVITY REGULATION</scope>
    <scope>PATHWAY</scope>
    <source>
        <strain>X7B</strain>
    </source>
</reference>
<reference key="2">
    <citation type="submission" date="2011-03" db="EMBL/GenBank/DDBJ databases">
        <authorList>
            <person name="Li Q."/>
            <person name="Su F."/>
            <person name="Tao F."/>
            <person name="Ma C."/>
            <person name="Xu P."/>
        </authorList>
    </citation>
    <scope>NUCLEOTIDE SEQUENCE [LARGE SCALE GENOMIC DNA]</scope>
    <source>
        <strain evidence="7">X7B</strain>
    </source>
</reference>
<reference key="3">
    <citation type="journal article" date="2015" name="J. Biotechnol.">
        <title>Complete genome sequence of Mycobacterium goodii X7B, a facultative thermophilic biodesulfurizing bacterium with industrial potential.</title>
        <authorList>
            <person name="Yu B."/>
            <person name="Tao F."/>
            <person name="Li F."/>
            <person name="Hou J."/>
            <person name="Tang H."/>
            <person name="Ma C."/>
            <person name="Xu P."/>
        </authorList>
    </citation>
    <scope>NUCLEOTIDE SEQUENCE [LARGE SCALE GENOMIC DNA]</scope>
    <source>
        <strain>X7B</strain>
    </source>
</reference>
<accession>B2CML6</accession>
<accession>G1C5K8</accession>
<evidence type="ECO:0000250" key="1">
    <source>
        <dbReference type="UniProtKB" id="A0A0C6DRW4"/>
    </source>
</evidence>
<evidence type="ECO:0000250" key="2">
    <source>
        <dbReference type="UniProtKB" id="Q0ZIH5"/>
    </source>
</evidence>
<evidence type="ECO:0000269" key="3">
    <source>
    </source>
</evidence>
<evidence type="ECO:0000303" key="4">
    <source>
    </source>
</evidence>
<evidence type="ECO:0000305" key="5"/>
<evidence type="ECO:0000305" key="6">
    <source>
    </source>
</evidence>
<evidence type="ECO:0000312" key="7">
    <source>
        <dbReference type="EMBL" id="AEK97796.1"/>
    </source>
</evidence>
<keyword id="KW-0963">Cytoplasm</keyword>
<keyword id="KW-0285">Flavoprotein</keyword>
<keyword id="KW-0288">FMN</keyword>
<keyword id="KW-0503">Monooxygenase</keyword>
<keyword id="KW-0547">Nucleotide-binding</keyword>
<keyword id="KW-0560">Oxidoreductase</keyword>
<name>DSZC_MYCGD</name>
<dbReference type="EC" id="1.14.14.21" evidence="3"/>
<dbReference type="EMBL" id="EU527978">
    <property type="protein sequence ID" value="ACB32256.1"/>
    <property type="molecule type" value="Genomic_DNA"/>
</dbReference>
<dbReference type="EMBL" id="JF740062">
    <property type="protein sequence ID" value="AEK97796.1"/>
    <property type="molecule type" value="Genomic_DNA"/>
</dbReference>
<dbReference type="EMBL" id="CP012150">
    <property type="protein sequence ID" value="AKS33209.1"/>
    <property type="molecule type" value="Genomic_DNA"/>
</dbReference>
<dbReference type="RefSeq" id="WP_023882538.1">
    <property type="nucleotide sequence ID" value="NZ_CP012150.1"/>
</dbReference>
<dbReference type="SMR" id="B2CML6"/>
<dbReference type="STRING" id="134601.AFA91_16295"/>
<dbReference type="GeneID" id="44296994"/>
<dbReference type="KEGG" id="mgo:AFA91_16295"/>
<dbReference type="PATRIC" id="fig|134601.6.peg.3381"/>
<dbReference type="OrthoDB" id="571684at2"/>
<dbReference type="BRENDA" id="1.14.14.21">
    <property type="organism ID" value="13503"/>
</dbReference>
<dbReference type="UniPathway" id="UPA00346"/>
<dbReference type="Proteomes" id="UP000062255">
    <property type="component" value="Chromosome"/>
</dbReference>
<dbReference type="GO" id="GO:0005737">
    <property type="term" value="C:cytoplasm"/>
    <property type="evidence" value="ECO:0007669"/>
    <property type="project" value="UniProtKB-SubCell"/>
</dbReference>
<dbReference type="GO" id="GO:0008470">
    <property type="term" value="F:3-methylbutanoyl-CoA dehydrogenase activity"/>
    <property type="evidence" value="ECO:0007669"/>
    <property type="project" value="TreeGrafter"/>
</dbReference>
<dbReference type="GO" id="GO:0050660">
    <property type="term" value="F:flavin adenine dinucleotide binding"/>
    <property type="evidence" value="ECO:0007669"/>
    <property type="project" value="InterPro"/>
</dbReference>
<dbReference type="GO" id="GO:0004497">
    <property type="term" value="F:monooxygenase activity"/>
    <property type="evidence" value="ECO:0007669"/>
    <property type="project" value="UniProtKB-KW"/>
</dbReference>
<dbReference type="GO" id="GO:0018896">
    <property type="term" value="P:dibenzothiophene catabolic process"/>
    <property type="evidence" value="ECO:0007669"/>
    <property type="project" value="UniProtKB-UniPathway"/>
</dbReference>
<dbReference type="GO" id="GO:0006552">
    <property type="term" value="P:L-leucine catabolic process"/>
    <property type="evidence" value="ECO:0007669"/>
    <property type="project" value="TreeGrafter"/>
</dbReference>
<dbReference type="CDD" id="cd01163">
    <property type="entry name" value="DszC"/>
    <property type="match status" value="1"/>
</dbReference>
<dbReference type="Gene3D" id="1.10.540.10">
    <property type="entry name" value="Acyl-CoA dehydrogenase/oxidase, N-terminal domain"/>
    <property type="match status" value="1"/>
</dbReference>
<dbReference type="Gene3D" id="2.40.110.10">
    <property type="entry name" value="Butyryl-CoA Dehydrogenase, subunit A, domain 2"/>
    <property type="match status" value="1"/>
</dbReference>
<dbReference type="Gene3D" id="1.20.140.10">
    <property type="entry name" value="Butyryl-CoA Dehydrogenase, subunit A, domain 3"/>
    <property type="match status" value="1"/>
</dbReference>
<dbReference type="InterPro" id="IPR013107">
    <property type="entry name" value="Acyl-CoA_DH_C"/>
</dbReference>
<dbReference type="InterPro" id="IPR006091">
    <property type="entry name" value="Acyl-CoA_Oxase/DH_mid-dom"/>
</dbReference>
<dbReference type="InterPro" id="IPR046373">
    <property type="entry name" value="Acyl-CoA_Oxase/DH_mid-dom_sf"/>
</dbReference>
<dbReference type="InterPro" id="IPR036250">
    <property type="entry name" value="AcylCo_DH-like_C"/>
</dbReference>
<dbReference type="InterPro" id="IPR013786">
    <property type="entry name" value="AcylCoA_DH/ox_N"/>
</dbReference>
<dbReference type="InterPro" id="IPR037069">
    <property type="entry name" value="AcylCoA_DH/ox_N_sf"/>
</dbReference>
<dbReference type="InterPro" id="IPR009100">
    <property type="entry name" value="AcylCoA_DH/oxidase_NM_dom_sf"/>
</dbReference>
<dbReference type="InterPro" id="IPR049992">
    <property type="entry name" value="DszC"/>
</dbReference>
<dbReference type="NCBIfam" id="NF043015">
    <property type="entry name" value="DibenthMonoxDszC"/>
    <property type="match status" value="1"/>
</dbReference>
<dbReference type="PANTHER" id="PTHR43884">
    <property type="entry name" value="ACYL-COA DEHYDROGENASE"/>
    <property type="match status" value="1"/>
</dbReference>
<dbReference type="PANTHER" id="PTHR43884:SF12">
    <property type="entry name" value="ISOVALERYL-COA DEHYDROGENASE, MITOCHONDRIAL-RELATED"/>
    <property type="match status" value="1"/>
</dbReference>
<dbReference type="Pfam" id="PF08028">
    <property type="entry name" value="Acyl-CoA_dh_2"/>
    <property type="match status" value="1"/>
</dbReference>
<dbReference type="Pfam" id="PF02770">
    <property type="entry name" value="Acyl-CoA_dh_M"/>
    <property type="match status" value="1"/>
</dbReference>
<dbReference type="Pfam" id="PF02771">
    <property type="entry name" value="Acyl-CoA_dh_N"/>
    <property type="match status" value="1"/>
</dbReference>
<dbReference type="PIRSF" id="PIRSF016578">
    <property type="entry name" value="HsaA"/>
    <property type="match status" value="1"/>
</dbReference>
<dbReference type="SUPFAM" id="SSF47203">
    <property type="entry name" value="Acyl-CoA dehydrogenase C-terminal domain-like"/>
    <property type="match status" value="1"/>
</dbReference>
<dbReference type="SUPFAM" id="SSF56645">
    <property type="entry name" value="Acyl-CoA dehydrogenase NM domain-like"/>
    <property type="match status" value="1"/>
</dbReference>
<organism>
    <name type="scientific">Mycolicibacterium goodii</name>
    <name type="common">Mycobacterium goodii</name>
    <dbReference type="NCBI Taxonomy" id="134601"/>
    <lineage>
        <taxon>Bacteria</taxon>
        <taxon>Bacillati</taxon>
        <taxon>Actinomycetota</taxon>
        <taxon>Actinomycetes</taxon>
        <taxon>Mycobacteriales</taxon>
        <taxon>Mycobacteriaceae</taxon>
        <taxon>Mycolicibacterium</taxon>
    </lineage>
</organism>
<sequence>MTLTDDTTTAQNSRHGDPIEVARELTRKWQTTVVERDKAGGSATEEREDLRASGLLSVTVPRHLGGWGADWPTALEVVREIAKVDGSLGHLFGYHLSTPAVIDLWGSPEQKERLLRQLAENNWWTGNASSENNSHILDWKVTATPADDGGYFFNGIKHFSSGAKGSDLLLVFGVIPEGFPQQGAIVAAAIPTTREGVQPNDDWQALGMRRTDSGTTEFHNVAVRPDEVLGKPNAILEAFLASGRGSLFGPIVQLVFSSVYLGIARGALETAREYTRTQARPWTPAGVTQAVEDPYTIRSYGEFGIQLQAADAAAREAAQLLQAAWDKGDALTSQERGELMVQISGVKAIATQAALDVTSRIFEVIGARGTHPKYGFDRFWRNIRTHTLHDPVSYKIAEVGNYVLNQRYPIPGFTS</sequence>
<protein>
    <recommendedName>
        <fullName evidence="4">Dibenzothiophene monooxygenase</fullName>
        <shortName>DBT monooxygenase</shortName>
        <shortName>DBT-MO</shortName>
        <ecNumber evidence="3">1.14.14.21</ecNumber>
    </recommendedName>
</protein>
<proteinExistence type="evidence at protein level"/>
<comment type="function">
    <text evidence="3">Catalyzes the first step of the '4S' desulfurization pathway that removes covalently bound sulfur from dibenzothiophene (DBT) without breaking carbon-carbon bonds. Sulfur dioxygenase which converts DBT to DBT-sulfone (DBTO2 or DBT 5,5-dioxide) probably in a stepwise manner. In addition to FMNH2 can also use FAD (although FAD is less efficient).</text>
</comment>
<comment type="catalytic activity">
    <reaction evidence="3">
        <text>dibenzothiophene + 2 FMNH2 + 2 O2 = dibenzothiophene 5,5-dioxide + 2 FMN + 2 H2O + 2 H(+)</text>
        <dbReference type="Rhea" id="RHEA:49072"/>
        <dbReference type="ChEBI" id="CHEBI:15377"/>
        <dbReference type="ChEBI" id="CHEBI:15378"/>
        <dbReference type="ChEBI" id="CHEBI:15379"/>
        <dbReference type="ChEBI" id="CHEBI:23681"/>
        <dbReference type="ChEBI" id="CHEBI:57618"/>
        <dbReference type="ChEBI" id="CHEBI:58210"/>
        <dbReference type="ChEBI" id="CHEBI:90356"/>
        <dbReference type="EC" id="1.14.14.21"/>
    </reaction>
</comment>
<comment type="catalytic activity">
    <reaction evidence="6">
        <text>dibenzothiophene + FMNH2 + O2 = dibenzothiophene 5-oxide + FMN + H2O + H(+)</text>
        <dbReference type="Rhea" id="RHEA:49076"/>
        <dbReference type="ChEBI" id="CHEBI:15377"/>
        <dbReference type="ChEBI" id="CHEBI:15378"/>
        <dbReference type="ChEBI" id="CHEBI:15379"/>
        <dbReference type="ChEBI" id="CHEBI:23681"/>
        <dbReference type="ChEBI" id="CHEBI:23683"/>
        <dbReference type="ChEBI" id="CHEBI:57618"/>
        <dbReference type="ChEBI" id="CHEBI:58210"/>
    </reaction>
</comment>
<comment type="catalytic activity">
    <reaction evidence="6">
        <text>dibenzothiophene 5-oxide + FMNH2 + O2 = dibenzothiophene 5,5-dioxide + FMN + H2O + H(+)</text>
        <dbReference type="Rhea" id="RHEA:49080"/>
        <dbReference type="ChEBI" id="CHEBI:15377"/>
        <dbReference type="ChEBI" id="CHEBI:15378"/>
        <dbReference type="ChEBI" id="CHEBI:15379"/>
        <dbReference type="ChEBI" id="CHEBI:23683"/>
        <dbReference type="ChEBI" id="CHEBI:57618"/>
        <dbReference type="ChEBI" id="CHEBI:58210"/>
        <dbReference type="ChEBI" id="CHEBI:90356"/>
    </reaction>
</comment>
<comment type="activity regulation">
    <text evidence="3">Inhibited at high concentrations of FMN or FAD.</text>
</comment>
<comment type="pathway">
    <text evidence="6">Sulfur metabolism; dibenzothiophene degradation.</text>
</comment>
<comment type="subunit">
    <text evidence="2">Homotetramer.</text>
</comment>
<comment type="subcellular location">
    <subcellularLocation>
        <location evidence="5">Cytoplasm</location>
    </subcellularLocation>
</comment>
<comment type="domain">
    <text evidence="1">The lid loop assumes one of 2 conformations allowing opening and closing of the active site.</text>
</comment>
<comment type="miscellaneous">
    <text evidence="3">Reduced flavin is provided by flavin reductase DszD. In a coupled DszC-DszD reaction both FMNH2 and FADH2 can be used, maximal DBTO2 production is seen with 5 uM FMN or with 35 uM FAD.</text>
</comment>
<comment type="similarity">
    <text evidence="5">Belongs to the DszC flavin monooxygenase family.</text>
</comment>
<gene>
    <name evidence="4" type="primary">dszC</name>
</gene>